<protein>
    <recommendedName>
        <fullName evidence="1">Serine--tRNA ligase</fullName>
        <ecNumber evidence="1">6.1.1.11</ecNumber>
    </recommendedName>
    <alternativeName>
        <fullName evidence="1">Seryl-tRNA synthetase</fullName>
        <shortName evidence="1">SerRS</shortName>
    </alternativeName>
    <alternativeName>
        <fullName evidence="1">Seryl-tRNA(Ser/Sec) synthetase</fullName>
    </alternativeName>
</protein>
<dbReference type="EC" id="6.1.1.11" evidence="1"/>
<dbReference type="EMBL" id="U00089">
    <property type="protein sequence ID" value="AAB95797.1"/>
    <property type="molecule type" value="Genomic_DNA"/>
</dbReference>
<dbReference type="PIR" id="S73475">
    <property type="entry name" value="S73475"/>
</dbReference>
<dbReference type="RefSeq" id="NP_109693.1">
    <property type="nucleotide sequence ID" value="NC_000912.1"/>
</dbReference>
<dbReference type="RefSeq" id="WP_010874362.1">
    <property type="nucleotide sequence ID" value="NZ_OU342337.1"/>
</dbReference>
<dbReference type="SMR" id="P75107"/>
<dbReference type="IntAct" id="P75107">
    <property type="interactions" value="1"/>
</dbReference>
<dbReference type="STRING" id="272634.MPN_005"/>
<dbReference type="EnsemblBacteria" id="AAB95797">
    <property type="protein sequence ID" value="AAB95797"/>
    <property type="gene ID" value="MPN_005"/>
</dbReference>
<dbReference type="KEGG" id="mpn:MPN_005"/>
<dbReference type="PATRIC" id="fig|272634.6.peg.5"/>
<dbReference type="HOGENOM" id="CLU_023797_1_1_14"/>
<dbReference type="OrthoDB" id="9804647at2"/>
<dbReference type="BioCyc" id="MPNE272634:G1GJ3-8-MONOMER"/>
<dbReference type="UniPathway" id="UPA00906">
    <property type="reaction ID" value="UER00895"/>
</dbReference>
<dbReference type="Proteomes" id="UP000000808">
    <property type="component" value="Chromosome"/>
</dbReference>
<dbReference type="GO" id="GO:0005737">
    <property type="term" value="C:cytoplasm"/>
    <property type="evidence" value="ECO:0007669"/>
    <property type="project" value="UniProtKB-SubCell"/>
</dbReference>
<dbReference type="GO" id="GO:0005524">
    <property type="term" value="F:ATP binding"/>
    <property type="evidence" value="ECO:0007669"/>
    <property type="project" value="UniProtKB-UniRule"/>
</dbReference>
<dbReference type="GO" id="GO:0004828">
    <property type="term" value="F:serine-tRNA ligase activity"/>
    <property type="evidence" value="ECO:0007669"/>
    <property type="project" value="UniProtKB-UniRule"/>
</dbReference>
<dbReference type="GO" id="GO:0016260">
    <property type="term" value="P:selenocysteine biosynthetic process"/>
    <property type="evidence" value="ECO:0007669"/>
    <property type="project" value="UniProtKB-UniRule"/>
</dbReference>
<dbReference type="GO" id="GO:0006434">
    <property type="term" value="P:seryl-tRNA aminoacylation"/>
    <property type="evidence" value="ECO:0007669"/>
    <property type="project" value="UniProtKB-UniRule"/>
</dbReference>
<dbReference type="CDD" id="cd00770">
    <property type="entry name" value="SerRS_core"/>
    <property type="match status" value="1"/>
</dbReference>
<dbReference type="Gene3D" id="3.30.930.10">
    <property type="entry name" value="Bira Bifunctional Protein, Domain 2"/>
    <property type="match status" value="1"/>
</dbReference>
<dbReference type="Gene3D" id="1.10.287.40">
    <property type="entry name" value="Serine-tRNA synthetase, tRNA binding domain"/>
    <property type="match status" value="1"/>
</dbReference>
<dbReference type="HAMAP" id="MF_00176">
    <property type="entry name" value="Ser_tRNA_synth_type1"/>
    <property type="match status" value="1"/>
</dbReference>
<dbReference type="InterPro" id="IPR002314">
    <property type="entry name" value="aa-tRNA-synt_IIb"/>
</dbReference>
<dbReference type="InterPro" id="IPR006195">
    <property type="entry name" value="aa-tRNA-synth_II"/>
</dbReference>
<dbReference type="InterPro" id="IPR045864">
    <property type="entry name" value="aa-tRNA-synth_II/BPL/LPL"/>
</dbReference>
<dbReference type="InterPro" id="IPR002317">
    <property type="entry name" value="Ser-tRNA-ligase_type_1"/>
</dbReference>
<dbReference type="InterPro" id="IPR015866">
    <property type="entry name" value="Ser-tRNA-synth_1_N"/>
</dbReference>
<dbReference type="InterPro" id="IPR042103">
    <property type="entry name" value="SerRS_1_N_sf"/>
</dbReference>
<dbReference type="InterPro" id="IPR033729">
    <property type="entry name" value="SerRS_core"/>
</dbReference>
<dbReference type="InterPro" id="IPR010978">
    <property type="entry name" value="tRNA-bd_arm"/>
</dbReference>
<dbReference type="NCBIfam" id="TIGR00414">
    <property type="entry name" value="serS"/>
    <property type="match status" value="1"/>
</dbReference>
<dbReference type="PANTHER" id="PTHR43697:SF1">
    <property type="entry name" value="SERINE--TRNA LIGASE"/>
    <property type="match status" value="1"/>
</dbReference>
<dbReference type="PANTHER" id="PTHR43697">
    <property type="entry name" value="SERYL-TRNA SYNTHETASE"/>
    <property type="match status" value="1"/>
</dbReference>
<dbReference type="Pfam" id="PF02403">
    <property type="entry name" value="Seryl_tRNA_N"/>
    <property type="match status" value="1"/>
</dbReference>
<dbReference type="Pfam" id="PF00587">
    <property type="entry name" value="tRNA-synt_2b"/>
    <property type="match status" value="1"/>
</dbReference>
<dbReference type="PIRSF" id="PIRSF001529">
    <property type="entry name" value="Ser-tRNA-synth_IIa"/>
    <property type="match status" value="1"/>
</dbReference>
<dbReference type="PRINTS" id="PR00981">
    <property type="entry name" value="TRNASYNTHSER"/>
</dbReference>
<dbReference type="SUPFAM" id="SSF55681">
    <property type="entry name" value="Class II aaRS and biotin synthetases"/>
    <property type="match status" value="1"/>
</dbReference>
<dbReference type="SUPFAM" id="SSF46589">
    <property type="entry name" value="tRNA-binding arm"/>
    <property type="match status" value="1"/>
</dbReference>
<dbReference type="PROSITE" id="PS50862">
    <property type="entry name" value="AA_TRNA_LIGASE_II"/>
    <property type="match status" value="1"/>
</dbReference>
<name>SYS_MYCPN</name>
<feature type="chain" id="PRO_0000122083" description="Serine--tRNA ligase">
    <location>
        <begin position="1"/>
        <end position="420"/>
    </location>
</feature>
<feature type="binding site" evidence="1">
    <location>
        <begin position="225"/>
        <end position="227"/>
    </location>
    <ligand>
        <name>L-serine</name>
        <dbReference type="ChEBI" id="CHEBI:33384"/>
    </ligand>
</feature>
<feature type="binding site" evidence="1">
    <location>
        <begin position="256"/>
        <end position="258"/>
    </location>
    <ligand>
        <name>ATP</name>
        <dbReference type="ChEBI" id="CHEBI:30616"/>
    </ligand>
</feature>
<feature type="binding site" evidence="1">
    <location>
        <position position="279"/>
    </location>
    <ligand>
        <name>L-serine</name>
        <dbReference type="ChEBI" id="CHEBI:33384"/>
    </ligand>
</feature>
<feature type="binding site" evidence="1">
    <location>
        <begin position="343"/>
        <end position="346"/>
    </location>
    <ligand>
        <name>ATP</name>
        <dbReference type="ChEBI" id="CHEBI:30616"/>
    </ligand>
</feature>
<feature type="binding site" evidence="1">
    <location>
        <position position="379"/>
    </location>
    <ligand>
        <name>L-serine</name>
        <dbReference type="ChEBI" id="CHEBI:33384"/>
    </ligand>
</feature>
<evidence type="ECO:0000255" key="1">
    <source>
        <dbReference type="HAMAP-Rule" id="MF_00176"/>
    </source>
</evidence>
<proteinExistence type="inferred from homology"/>
<accession>P75107</accession>
<comment type="function">
    <text evidence="1">Catalyzes the attachment of serine to tRNA(Ser). Is also able to aminoacylate tRNA(Sec) with serine, to form the misacylated tRNA L-seryl-tRNA(Sec), which will be further converted into selenocysteinyl-tRNA(Sec).</text>
</comment>
<comment type="catalytic activity">
    <reaction evidence="1">
        <text>tRNA(Ser) + L-serine + ATP = L-seryl-tRNA(Ser) + AMP + diphosphate + H(+)</text>
        <dbReference type="Rhea" id="RHEA:12292"/>
        <dbReference type="Rhea" id="RHEA-COMP:9669"/>
        <dbReference type="Rhea" id="RHEA-COMP:9703"/>
        <dbReference type="ChEBI" id="CHEBI:15378"/>
        <dbReference type="ChEBI" id="CHEBI:30616"/>
        <dbReference type="ChEBI" id="CHEBI:33019"/>
        <dbReference type="ChEBI" id="CHEBI:33384"/>
        <dbReference type="ChEBI" id="CHEBI:78442"/>
        <dbReference type="ChEBI" id="CHEBI:78533"/>
        <dbReference type="ChEBI" id="CHEBI:456215"/>
        <dbReference type="EC" id="6.1.1.11"/>
    </reaction>
</comment>
<comment type="catalytic activity">
    <reaction evidence="1">
        <text>tRNA(Sec) + L-serine + ATP = L-seryl-tRNA(Sec) + AMP + diphosphate + H(+)</text>
        <dbReference type="Rhea" id="RHEA:42580"/>
        <dbReference type="Rhea" id="RHEA-COMP:9742"/>
        <dbReference type="Rhea" id="RHEA-COMP:10128"/>
        <dbReference type="ChEBI" id="CHEBI:15378"/>
        <dbReference type="ChEBI" id="CHEBI:30616"/>
        <dbReference type="ChEBI" id="CHEBI:33019"/>
        <dbReference type="ChEBI" id="CHEBI:33384"/>
        <dbReference type="ChEBI" id="CHEBI:78442"/>
        <dbReference type="ChEBI" id="CHEBI:78533"/>
        <dbReference type="ChEBI" id="CHEBI:456215"/>
        <dbReference type="EC" id="6.1.1.11"/>
    </reaction>
</comment>
<comment type="pathway">
    <text evidence="1">Aminoacyl-tRNA biosynthesis; selenocysteinyl-tRNA(Sec) biosynthesis; L-seryl-tRNA(Sec) from L-serine and tRNA(Sec): step 1/1.</text>
</comment>
<comment type="subunit">
    <text evidence="1">Homodimer. The tRNA molecule binds across the dimer.</text>
</comment>
<comment type="subcellular location">
    <subcellularLocation>
        <location evidence="1">Cytoplasm</location>
    </subcellularLocation>
</comment>
<comment type="domain">
    <text evidence="1">Consists of two distinct domains, a catalytic core and a N-terminal extension that is involved in tRNA binding.</text>
</comment>
<comment type="similarity">
    <text evidence="1">Belongs to the class-II aminoacyl-tRNA synthetase family. Type-1 seryl-tRNA synthetase subfamily.</text>
</comment>
<reference key="1">
    <citation type="journal article" date="1996" name="Nucleic Acids Res.">
        <title>Complete sequence analysis of the genome of the bacterium Mycoplasma pneumoniae.</title>
        <authorList>
            <person name="Himmelreich R."/>
            <person name="Hilbert H."/>
            <person name="Plagens H."/>
            <person name="Pirkl E."/>
            <person name="Li B.-C."/>
            <person name="Herrmann R."/>
        </authorList>
    </citation>
    <scope>NUCLEOTIDE SEQUENCE [LARGE SCALE GENOMIC DNA]</scope>
    <source>
        <strain>ATCC 29342 / M129 / Subtype 1</strain>
    </source>
</reference>
<gene>
    <name evidence="1" type="primary">serS</name>
    <name type="ordered locus">MPN_005</name>
    <name type="ORF">MP149</name>
</gene>
<keyword id="KW-0030">Aminoacyl-tRNA synthetase</keyword>
<keyword id="KW-0067">ATP-binding</keyword>
<keyword id="KW-0963">Cytoplasm</keyword>
<keyword id="KW-0436">Ligase</keyword>
<keyword id="KW-0547">Nucleotide-binding</keyword>
<keyword id="KW-0648">Protein biosynthesis</keyword>
<keyword id="KW-1185">Reference proteome</keyword>
<organism>
    <name type="scientific">Mycoplasma pneumoniae (strain ATCC 29342 / M129 / Subtype 1)</name>
    <name type="common">Mycoplasmoides pneumoniae</name>
    <dbReference type="NCBI Taxonomy" id="272634"/>
    <lineage>
        <taxon>Bacteria</taxon>
        <taxon>Bacillati</taxon>
        <taxon>Mycoplasmatota</taxon>
        <taxon>Mycoplasmoidales</taxon>
        <taxon>Mycoplasmoidaceae</taxon>
        <taxon>Mycoplasmoides</taxon>
    </lineage>
</organism>
<sequence>MLDRNKLRNNLDFFKKKLVERGVSESQFEAYVQADKAMRKLLHQIELANQKQTLLAQQVAKKKGDPKLLKESKELKQKLEQLNIAFKEAETLSQELLLNLPNIADESVPVGRDETANLELLKEGRKPVFDFTPLPHWELCERLQLVAFDKATKLTGARFVAYTDKAAKLLRAIASLMIDLNKNKYQEWNVPVIVNETSLTGTGQLPKFKDDVFKLENTRYYLSPTLEVQLANLHANEIFTEGELPKYYTATGVNFRQEAGSAGKQTKGTIRLHQFQKVELVKFCKPSEAIHELEEMTRDAEQILLELKIPFRRLLLCSGDMGFSAQKTYDLEVWMAGCNEYREVSSCSSCGDFQARRAMIRYKDLTTGKNTYVATLNGTALAIDRIFAAILEHYQTKAGEVMIPQALLKYLDFDKITKPK</sequence>